<gene>
    <name evidence="1" type="primary">folD</name>
    <name type="ordered locus">BL0993</name>
</gene>
<proteinExistence type="inferred from homology"/>
<sequence>MMSTKIDGKQIAAEIKTNLAERVNKLKAQGIQPGLGTLLVGEDPGSMKYVAGKHADCQEVGITSVKKELPADASFDDIAAAVRELNEDPACTGFIVQLPLPKGINENAIIDMIDPAKDADGMHPYNLGELVLHVRGDISTPLPCTPRGVLELLDAYDIDLNGKEVCVLGRGITIGRTIGLMLTRNAVNATVTLCHTGTRDVADHMRRADVIVAAMGSAGFVTPDKIKDGAVLVDVGVSRVYDEEAGRYRIKGDVDKACYDKASAYTPNPGGVGPMTRAMLLANVVEMAERHA</sequence>
<dbReference type="EC" id="1.5.1.5" evidence="1"/>
<dbReference type="EC" id="3.5.4.9" evidence="1"/>
<dbReference type="EMBL" id="AE014295">
    <property type="protein sequence ID" value="AAN24801.1"/>
    <property type="molecule type" value="Genomic_DNA"/>
</dbReference>
<dbReference type="RefSeq" id="NP_696165.1">
    <property type="nucleotide sequence ID" value="NC_004307.2"/>
</dbReference>
<dbReference type="SMR" id="Q8G5L6"/>
<dbReference type="STRING" id="206672.BL0993"/>
<dbReference type="EnsemblBacteria" id="AAN24801">
    <property type="protein sequence ID" value="AAN24801"/>
    <property type="gene ID" value="BL0993"/>
</dbReference>
<dbReference type="KEGG" id="blo:BL0993"/>
<dbReference type="PATRIC" id="fig|206672.9.peg.695"/>
<dbReference type="HOGENOM" id="CLU_034045_3_0_11"/>
<dbReference type="OrthoDB" id="9803580at2"/>
<dbReference type="PhylomeDB" id="Q8G5L6"/>
<dbReference type="UniPathway" id="UPA00193"/>
<dbReference type="Proteomes" id="UP000000439">
    <property type="component" value="Chromosome"/>
</dbReference>
<dbReference type="GO" id="GO:0005829">
    <property type="term" value="C:cytosol"/>
    <property type="evidence" value="ECO:0007669"/>
    <property type="project" value="TreeGrafter"/>
</dbReference>
<dbReference type="GO" id="GO:0004477">
    <property type="term" value="F:methenyltetrahydrofolate cyclohydrolase activity"/>
    <property type="evidence" value="ECO:0007669"/>
    <property type="project" value="UniProtKB-UniRule"/>
</dbReference>
<dbReference type="GO" id="GO:0004488">
    <property type="term" value="F:methylenetetrahydrofolate dehydrogenase (NADP+) activity"/>
    <property type="evidence" value="ECO:0007669"/>
    <property type="project" value="UniProtKB-UniRule"/>
</dbReference>
<dbReference type="GO" id="GO:0000105">
    <property type="term" value="P:L-histidine biosynthetic process"/>
    <property type="evidence" value="ECO:0007669"/>
    <property type="project" value="UniProtKB-KW"/>
</dbReference>
<dbReference type="GO" id="GO:0009086">
    <property type="term" value="P:methionine biosynthetic process"/>
    <property type="evidence" value="ECO:0007669"/>
    <property type="project" value="UniProtKB-KW"/>
</dbReference>
<dbReference type="GO" id="GO:0006164">
    <property type="term" value="P:purine nucleotide biosynthetic process"/>
    <property type="evidence" value="ECO:0007669"/>
    <property type="project" value="UniProtKB-KW"/>
</dbReference>
<dbReference type="GO" id="GO:0035999">
    <property type="term" value="P:tetrahydrofolate interconversion"/>
    <property type="evidence" value="ECO:0007669"/>
    <property type="project" value="UniProtKB-UniRule"/>
</dbReference>
<dbReference type="CDD" id="cd01080">
    <property type="entry name" value="NAD_bind_m-THF_DH_Cyclohyd"/>
    <property type="match status" value="1"/>
</dbReference>
<dbReference type="FunFam" id="3.40.50.10860:FF:000005">
    <property type="entry name" value="C-1-tetrahydrofolate synthase, cytoplasmic, putative"/>
    <property type="match status" value="1"/>
</dbReference>
<dbReference type="Gene3D" id="3.40.50.10860">
    <property type="entry name" value="Leucine Dehydrogenase, chain A, domain 1"/>
    <property type="match status" value="1"/>
</dbReference>
<dbReference type="Gene3D" id="3.40.50.720">
    <property type="entry name" value="NAD(P)-binding Rossmann-like Domain"/>
    <property type="match status" value="1"/>
</dbReference>
<dbReference type="HAMAP" id="MF_01576">
    <property type="entry name" value="THF_DHG_CYH"/>
    <property type="match status" value="1"/>
</dbReference>
<dbReference type="InterPro" id="IPR046346">
    <property type="entry name" value="Aminoacid_DH-like_N_sf"/>
</dbReference>
<dbReference type="InterPro" id="IPR036291">
    <property type="entry name" value="NAD(P)-bd_dom_sf"/>
</dbReference>
<dbReference type="InterPro" id="IPR000672">
    <property type="entry name" value="THF_DH/CycHdrlase"/>
</dbReference>
<dbReference type="InterPro" id="IPR020630">
    <property type="entry name" value="THF_DH/CycHdrlase_cat_dom"/>
</dbReference>
<dbReference type="InterPro" id="IPR020631">
    <property type="entry name" value="THF_DH/CycHdrlase_NAD-bd_dom"/>
</dbReference>
<dbReference type="NCBIfam" id="NF010789">
    <property type="entry name" value="PRK14193.1"/>
    <property type="match status" value="1"/>
</dbReference>
<dbReference type="PANTHER" id="PTHR48099:SF5">
    <property type="entry name" value="C-1-TETRAHYDROFOLATE SYNTHASE, CYTOPLASMIC"/>
    <property type="match status" value="1"/>
</dbReference>
<dbReference type="PANTHER" id="PTHR48099">
    <property type="entry name" value="C-1-TETRAHYDROFOLATE SYNTHASE, CYTOPLASMIC-RELATED"/>
    <property type="match status" value="1"/>
</dbReference>
<dbReference type="Pfam" id="PF00763">
    <property type="entry name" value="THF_DHG_CYH"/>
    <property type="match status" value="1"/>
</dbReference>
<dbReference type="Pfam" id="PF02882">
    <property type="entry name" value="THF_DHG_CYH_C"/>
    <property type="match status" value="1"/>
</dbReference>
<dbReference type="PRINTS" id="PR00085">
    <property type="entry name" value="THFDHDRGNASE"/>
</dbReference>
<dbReference type="SUPFAM" id="SSF53223">
    <property type="entry name" value="Aminoacid dehydrogenase-like, N-terminal domain"/>
    <property type="match status" value="1"/>
</dbReference>
<dbReference type="SUPFAM" id="SSF51735">
    <property type="entry name" value="NAD(P)-binding Rossmann-fold domains"/>
    <property type="match status" value="1"/>
</dbReference>
<protein>
    <recommendedName>
        <fullName evidence="1">Bifunctional protein FolD</fullName>
    </recommendedName>
    <domain>
        <recommendedName>
            <fullName evidence="1">Methylenetetrahydrofolate dehydrogenase</fullName>
            <ecNumber evidence="1">1.5.1.5</ecNumber>
        </recommendedName>
    </domain>
    <domain>
        <recommendedName>
            <fullName evidence="1">Methenyltetrahydrofolate cyclohydrolase</fullName>
            <ecNumber evidence="1">3.5.4.9</ecNumber>
        </recommendedName>
    </domain>
</protein>
<evidence type="ECO:0000255" key="1">
    <source>
        <dbReference type="HAMAP-Rule" id="MF_01576"/>
    </source>
</evidence>
<organism>
    <name type="scientific">Bifidobacterium longum (strain NCC 2705)</name>
    <dbReference type="NCBI Taxonomy" id="206672"/>
    <lineage>
        <taxon>Bacteria</taxon>
        <taxon>Bacillati</taxon>
        <taxon>Actinomycetota</taxon>
        <taxon>Actinomycetes</taxon>
        <taxon>Bifidobacteriales</taxon>
        <taxon>Bifidobacteriaceae</taxon>
        <taxon>Bifidobacterium</taxon>
    </lineage>
</organism>
<accession>Q8G5L6</accession>
<comment type="function">
    <text evidence="1">Catalyzes the oxidation of 5,10-methylenetetrahydrofolate to 5,10-methenyltetrahydrofolate and then the hydrolysis of 5,10-methenyltetrahydrofolate to 10-formyltetrahydrofolate.</text>
</comment>
<comment type="catalytic activity">
    <reaction evidence="1">
        <text>(6R)-5,10-methylene-5,6,7,8-tetrahydrofolate + NADP(+) = (6R)-5,10-methenyltetrahydrofolate + NADPH</text>
        <dbReference type="Rhea" id="RHEA:22812"/>
        <dbReference type="ChEBI" id="CHEBI:15636"/>
        <dbReference type="ChEBI" id="CHEBI:57455"/>
        <dbReference type="ChEBI" id="CHEBI:57783"/>
        <dbReference type="ChEBI" id="CHEBI:58349"/>
        <dbReference type="EC" id="1.5.1.5"/>
    </reaction>
</comment>
<comment type="catalytic activity">
    <reaction evidence="1">
        <text>(6R)-5,10-methenyltetrahydrofolate + H2O = (6R)-10-formyltetrahydrofolate + H(+)</text>
        <dbReference type="Rhea" id="RHEA:23700"/>
        <dbReference type="ChEBI" id="CHEBI:15377"/>
        <dbReference type="ChEBI" id="CHEBI:15378"/>
        <dbReference type="ChEBI" id="CHEBI:57455"/>
        <dbReference type="ChEBI" id="CHEBI:195366"/>
        <dbReference type="EC" id="3.5.4.9"/>
    </reaction>
</comment>
<comment type="pathway">
    <text evidence="1">One-carbon metabolism; tetrahydrofolate interconversion.</text>
</comment>
<comment type="subunit">
    <text evidence="1">Homodimer.</text>
</comment>
<comment type="similarity">
    <text evidence="1">Belongs to the tetrahydrofolate dehydrogenase/cyclohydrolase family.</text>
</comment>
<feature type="chain" id="PRO_0000268280" description="Bifunctional protein FolD">
    <location>
        <begin position="1"/>
        <end position="292"/>
    </location>
</feature>
<feature type="binding site" evidence="1">
    <location>
        <begin position="169"/>
        <end position="171"/>
    </location>
    <ligand>
        <name>NADP(+)</name>
        <dbReference type="ChEBI" id="CHEBI:58349"/>
    </ligand>
</feature>
<feature type="binding site" evidence="1">
    <location>
        <position position="196"/>
    </location>
    <ligand>
        <name>NADP(+)</name>
        <dbReference type="ChEBI" id="CHEBI:58349"/>
    </ligand>
</feature>
<feature type="binding site" evidence="1">
    <location>
        <position position="237"/>
    </location>
    <ligand>
        <name>NADP(+)</name>
        <dbReference type="ChEBI" id="CHEBI:58349"/>
    </ligand>
</feature>
<name>FOLD_BIFLO</name>
<reference key="1">
    <citation type="journal article" date="2002" name="Proc. Natl. Acad. Sci. U.S.A.">
        <title>The genome sequence of Bifidobacterium longum reflects its adaptation to the human gastrointestinal tract.</title>
        <authorList>
            <person name="Schell M.A."/>
            <person name="Karmirantzou M."/>
            <person name="Snel B."/>
            <person name="Vilanova D."/>
            <person name="Berger B."/>
            <person name="Pessi G."/>
            <person name="Zwahlen M.-C."/>
            <person name="Desiere F."/>
            <person name="Bork P."/>
            <person name="Delley M."/>
            <person name="Pridmore R.D."/>
            <person name="Arigoni F."/>
        </authorList>
    </citation>
    <scope>NUCLEOTIDE SEQUENCE [LARGE SCALE GENOMIC DNA]</scope>
    <source>
        <strain>NCC 2705</strain>
    </source>
</reference>
<keyword id="KW-0028">Amino-acid biosynthesis</keyword>
<keyword id="KW-0368">Histidine biosynthesis</keyword>
<keyword id="KW-0378">Hydrolase</keyword>
<keyword id="KW-0486">Methionine biosynthesis</keyword>
<keyword id="KW-0511">Multifunctional enzyme</keyword>
<keyword id="KW-0521">NADP</keyword>
<keyword id="KW-0554">One-carbon metabolism</keyword>
<keyword id="KW-0560">Oxidoreductase</keyword>
<keyword id="KW-0658">Purine biosynthesis</keyword>
<keyword id="KW-1185">Reference proteome</keyword>